<keyword id="KW-0067">ATP-binding</keyword>
<keyword id="KW-0963">Cytoplasm</keyword>
<keyword id="KW-0436">Ligase</keyword>
<keyword id="KW-0547">Nucleotide-binding</keyword>
<keyword id="KW-0566">Pantothenate biosynthesis</keyword>
<name>PANC_HYDCU</name>
<organism>
    <name type="scientific">Hydrogenovibrio crunogenus (strain DSM 25203 / XCL-2)</name>
    <name type="common">Thiomicrospira crunogena</name>
    <dbReference type="NCBI Taxonomy" id="317025"/>
    <lineage>
        <taxon>Bacteria</taxon>
        <taxon>Pseudomonadati</taxon>
        <taxon>Pseudomonadota</taxon>
        <taxon>Gammaproteobacteria</taxon>
        <taxon>Thiotrichales</taxon>
        <taxon>Piscirickettsiaceae</taxon>
        <taxon>Hydrogenovibrio</taxon>
    </lineage>
</organism>
<proteinExistence type="inferred from homology"/>
<protein>
    <recommendedName>
        <fullName evidence="1">Pantothenate synthetase</fullName>
        <shortName evidence="1">PS</shortName>
        <ecNumber evidence="1">6.3.2.1</ecNumber>
    </recommendedName>
    <alternativeName>
        <fullName evidence="1">Pantoate--beta-alanine ligase</fullName>
    </alternativeName>
    <alternativeName>
        <fullName evidence="1">Pantoate-activating enzyme</fullName>
    </alternativeName>
</protein>
<comment type="function">
    <text evidence="1">Catalyzes the condensation of pantoate with beta-alanine in an ATP-dependent reaction via a pantoyl-adenylate intermediate.</text>
</comment>
<comment type="catalytic activity">
    <reaction evidence="1">
        <text>(R)-pantoate + beta-alanine + ATP = (R)-pantothenate + AMP + diphosphate + H(+)</text>
        <dbReference type="Rhea" id="RHEA:10912"/>
        <dbReference type="ChEBI" id="CHEBI:15378"/>
        <dbReference type="ChEBI" id="CHEBI:15980"/>
        <dbReference type="ChEBI" id="CHEBI:29032"/>
        <dbReference type="ChEBI" id="CHEBI:30616"/>
        <dbReference type="ChEBI" id="CHEBI:33019"/>
        <dbReference type="ChEBI" id="CHEBI:57966"/>
        <dbReference type="ChEBI" id="CHEBI:456215"/>
        <dbReference type="EC" id="6.3.2.1"/>
    </reaction>
</comment>
<comment type="pathway">
    <text evidence="1">Cofactor biosynthesis; (R)-pantothenate biosynthesis; (R)-pantothenate from (R)-pantoate and beta-alanine: step 1/1.</text>
</comment>
<comment type="subunit">
    <text evidence="1">Homodimer.</text>
</comment>
<comment type="subcellular location">
    <subcellularLocation>
        <location evidence="1">Cytoplasm</location>
    </subcellularLocation>
</comment>
<comment type="miscellaneous">
    <text evidence="1">The reaction proceeds by a bi uni uni bi ping pong mechanism.</text>
</comment>
<comment type="similarity">
    <text evidence="1">Belongs to the pantothenate synthetase family.</text>
</comment>
<dbReference type="EC" id="6.3.2.1" evidence="1"/>
<dbReference type="EMBL" id="CP000109">
    <property type="protein sequence ID" value="ABB42117.1"/>
    <property type="molecule type" value="Genomic_DNA"/>
</dbReference>
<dbReference type="SMR" id="Q31FF6"/>
<dbReference type="STRING" id="317025.Tcr_1525"/>
<dbReference type="KEGG" id="tcx:Tcr_1525"/>
<dbReference type="eggNOG" id="COG0414">
    <property type="taxonomic scope" value="Bacteria"/>
</dbReference>
<dbReference type="HOGENOM" id="CLU_047148_0_0_6"/>
<dbReference type="OrthoDB" id="9773087at2"/>
<dbReference type="UniPathway" id="UPA00028">
    <property type="reaction ID" value="UER00005"/>
</dbReference>
<dbReference type="GO" id="GO:0005829">
    <property type="term" value="C:cytosol"/>
    <property type="evidence" value="ECO:0007669"/>
    <property type="project" value="TreeGrafter"/>
</dbReference>
<dbReference type="GO" id="GO:0005524">
    <property type="term" value="F:ATP binding"/>
    <property type="evidence" value="ECO:0007669"/>
    <property type="project" value="UniProtKB-KW"/>
</dbReference>
<dbReference type="GO" id="GO:0004592">
    <property type="term" value="F:pantoate-beta-alanine ligase activity"/>
    <property type="evidence" value="ECO:0007669"/>
    <property type="project" value="UniProtKB-UniRule"/>
</dbReference>
<dbReference type="GO" id="GO:0015940">
    <property type="term" value="P:pantothenate biosynthetic process"/>
    <property type="evidence" value="ECO:0007669"/>
    <property type="project" value="UniProtKB-UniRule"/>
</dbReference>
<dbReference type="CDD" id="cd00560">
    <property type="entry name" value="PanC"/>
    <property type="match status" value="1"/>
</dbReference>
<dbReference type="FunFam" id="3.40.50.620:FF:000013">
    <property type="entry name" value="Pantothenate synthetase"/>
    <property type="match status" value="1"/>
</dbReference>
<dbReference type="Gene3D" id="3.40.50.620">
    <property type="entry name" value="HUPs"/>
    <property type="match status" value="1"/>
</dbReference>
<dbReference type="Gene3D" id="3.30.1300.10">
    <property type="entry name" value="Pantoate-beta-alanine ligase, C-terminal domain"/>
    <property type="match status" value="1"/>
</dbReference>
<dbReference type="HAMAP" id="MF_00158">
    <property type="entry name" value="PanC"/>
    <property type="match status" value="1"/>
</dbReference>
<dbReference type="InterPro" id="IPR004821">
    <property type="entry name" value="Cyt_trans-like"/>
</dbReference>
<dbReference type="InterPro" id="IPR003721">
    <property type="entry name" value="Pantoate_ligase"/>
</dbReference>
<dbReference type="InterPro" id="IPR042176">
    <property type="entry name" value="Pantoate_ligase_C"/>
</dbReference>
<dbReference type="InterPro" id="IPR014729">
    <property type="entry name" value="Rossmann-like_a/b/a_fold"/>
</dbReference>
<dbReference type="NCBIfam" id="TIGR00125">
    <property type="entry name" value="cyt_tran_rel"/>
    <property type="match status" value="1"/>
</dbReference>
<dbReference type="NCBIfam" id="TIGR00018">
    <property type="entry name" value="panC"/>
    <property type="match status" value="1"/>
</dbReference>
<dbReference type="PANTHER" id="PTHR21299">
    <property type="entry name" value="CYTIDYLATE KINASE/PANTOATE-BETA-ALANINE LIGASE"/>
    <property type="match status" value="1"/>
</dbReference>
<dbReference type="PANTHER" id="PTHR21299:SF1">
    <property type="entry name" value="PANTOATE--BETA-ALANINE LIGASE"/>
    <property type="match status" value="1"/>
</dbReference>
<dbReference type="Pfam" id="PF02569">
    <property type="entry name" value="Pantoate_ligase"/>
    <property type="match status" value="1"/>
</dbReference>
<dbReference type="SUPFAM" id="SSF52374">
    <property type="entry name" value="Nucleotidylyl transferase"/>
    <property type="match status" value="1"/>
</dbReference>
<reference key="1">
    <citation type="journal article" date="2006" name="PLoS Biol.">
        <title>The genome of deep-sea vent chemolithoautotroph Thiomicrospira crunogena XCL-2.</title>
        <authorList>
            <person name="Scott K.M."/>
            <person name="Sievert S.M."/>
            <person name="Abril F.N."/>
            <person name="Ball L.A."/>
            <person name="Barrett C.J."/>
            <person name="Blake R.A."/>
            <person name="Boller A.J."/>
            <person name="Chain P.S.G."/>
            <person name="Clark J.A."/>
            <person name="Davis C.R."/>
            <person name="Detter C."/>
            <person name="Do K.F."/>
            <person name="Dobrinski K.P."/>
            <person name="Faza B.I."/>
            <person name="Fitzpatrick K.A."/>
            <person name="Freyermuth S.K."/>
            <person name="Harmer T.L."/>
            <person name="Hauser L.J."/>
            <person name="Huegler M."/>
            <person name="Kerfeld C.A."/>
            <person name="Klotz M.G."/>
            <person name="Kong W.W."/>
            <person name="Land M."/>
            <person name="Lapidus A."/>
            <person name="Larimer F.W."/>
            <person name="Longo D.L."/>
            <person name="Lucas S."/>
            <person name="Malfatti S.A."/>
            <person name="Massey S.E."/>
            <person name="Martin D.D."/>
            <person name="McCuddin Z."/>
            <person name="Meyer F."/>
            <person name="Moore J.L."/>
            <person name="Ocampo L.H. Jr."/>
            <person name="Paul J.H."/>
            <person name="Paulsen I.T."/>
            <person name="Reep D.K."/>
            <person name="Ren Q."/>
            <person name="Ross R.L."/>
            <person name="Sato P.Y."/>
            <person name="Thomas P."/>
            <person name="Tinkham L.E."/>
            <person name="Zeruth G.T."/>
        </authorList>
    </citation>
    <scope>NUCLEOTIDE SEQUENCE [LARGE SCALE GENOMIC DNA]</scope>
    <source>
        <strain>DSM 25203 / XCL-2</strain>
    </source>
</reference>
<sequence length="283" mass="31185">MVVLDSVSTLRESIQKWRKAGLTIGFVPTMGNLHAGHLSLVKQARQKSDKVIVSIFVNPLQFGPDEDYDRYPRTFEADKALLQQHNADAVFCPSVDEMYPNGQAQTRVIAPEKMTSILEGAKRPGHFDGVTTVVAKLFNMVQPDIAILGQKDFQQFAVLQQMVEDLALSVELIRAPIVRDETGLALSSRNQYLTEIQRSVAPKLFVALQSIEMAIRSGNKNYSSLCQIATQQVLSDGFDAVDYIQVLNASSLEEPQQGDQALVIVAAAKLGQTRLLDNVLVSL</sequence>
<gene>
    <name evidence="1" type="primary">panC</name>
    <name type="ordered locus">Tcr_1525</name>
</gene>
<feature type="chain" id="PRO_0000305569" description="Pantothenate synthetase">
    <location>
        <begin position="1"/>
        <end position="283"/>
    </location>
</feature>
<feature type="active site" description="Proton donor" evidence="1">
    <location>
        <position position="37"/>
    </location>
</feature>
<feature type="binding site" evidence="1">
    <location>
        <begin position="30"/>
        <end position="37"/>
    </location>
    <ligand>
        <name>ATP</name>
        <dbReference type="ChEBI" id="CHEBI:30616"/>
    </ligand>
</feature>
<feature type="binding site" evidence="1">
    <location>
        <position position="61"/>
    </location>
    <ligand>
        <name>(R)-pantoate</name>
        <dbReference type="ChEBI" id="CHEBI:15980"/>
    </ligand>
</feature>
<feature type="binding site" evidence="1">
    <location>
        <position position="61"/>
    </location>
    <ligand>
        <name>beta-alanine</name>
        <dbReference type="ChEBI" id="CHEBI:57966"/>
    </ligand>
</feature>
<feature type="binding site" evidence="1">
    <location>
        <begin position="149"/>
        <end position="152"/>
    </location>
    <ligand>
        <name>ATP</name>
        <dbReference type="ChEBI" id="CHEBI:30616"/>
    </ligand>
</feature>
<feature type="binding site" evidence="1">
    <location>
        <position position="155"/>
    </location>
    <ligand>
        <name>(R)-pantoate</name>
        <dbReference type="ChEBI" id="CHEBI:15980"/>
    </ligand>
</feature>
<feature type="binding site" evidence="1">
    <location>
        <position position="178"/>
    </location>
    <ligand>
        <name>ATP</name>
        <dbReference type="ChEBI" id="CHEBI:30616"/>
    </ligand>
</feature>
<feature type="binding site" evidence="1">
    <location>
        <begin position="186"/>
        <end position="189"/>
    </location>
    <ligand>
        <name>ATP</name>
        <dbReference type="ChEBI" id="CHEBI:30616"/>
    </ligand>
</feature>
<accession>Q31FF6</accession>
<evidence type="ECO:0000255" key="1">
    <source>
        <dbReference type="HAMAP-Rule" id="MF_00158"/>
    </source>
</evidence>